<protein>
    <recommendedName>
        <fullName>Zinc finger CCCH domain-containing protein 44</fullName>
        <shortName>AtC3H44</shortName>
    </recommendedName>
</protein>
<gene>
    <name type="ordered locus">At3g51120</name>
    <name type="ORF">F24M12.160</name>
</gene>
<dbReference type="EMBL" id="AL132980">
    <property type="protein sequence ID" value="CAB62634.1"/>
    <property type="status" value="ALT_SEQ"/>
    <property type="molecule type" value="Genomic_DNA"/>
</dbReference>
<dbReference type="EMBL" id="CP002686">
    <property type="status" value="NOT_ANNOTATED_CDS"/>
    <property type="molecule type" value="Genomic_DNA"/>
</dbReference>
<dbReference type="PIR" id="T45743">
    <property type="entry name" value="T45743"/>
</dbReference>
<dbReference type="SMR" id="Q9SD34"/>
<dbReference type="STRING" id="3702.Q9SD34"/>
<dbReference type="GlyGen" id="Q9SD34">
    <property type="glycosylation" value="2 sites, 1 O-linked glycan (1 site)"/>
</dbReference>
<dbReference type="PaxDb" id="3702-AT3G51120.1"/>
<dbReference type="ProteomicsDB" id="240496"/>
<dbReference type="Araport" id="AT3G51120"/>
<dbReference type="TAIR" id="AT3G51120"/>
<dbReference type="eggNOG" id="KOG1081">
    <property type="taxonomic scope" value="Eukaryota"/>
</dbReference>
<dbReference type="eggNOG" id="KOG1862">
    <property type="taxonomic scope" value="Eukaryota"/>
</dbReference>
<dbReference type="eggNOG" id="KOG1946">
    <property type="taxonomic scope" value="Eukaryota"/>
</dbReference>
<dbReference type="HOGENOM" id="CLU_002000_1_0_1"/>
<dbReference type="InParanoid" id="Q9SD34"/>
<dbReference type="PRO" id="PR:Q9SD34"/>
<dbReference type="Proteomes" id="UP000006548">
    <property type="component" value="Chromosome 3"/>
</dbReference>
<dbReference type="ExpressionAtlas" id="Q9SD34">
    <property type="expression patterns" value="baseline and differential"/>
</dbReference>
<dbReference type="GO" id="GO:0003677">
    <property type="term" value="F:DNA binding"/>
    <property type="evidence" value="ECO:0007669"/>
    <property type="project" value="UniProtKB-KW"/>
</dbReference>
<dbReference type="GO" id="GO:0008270">
    <property type="term" value="F:zinc ion binding"/>
    <property type="evidence" value="ECO:0007669"/>
    <property type="project" value="UniProtKB-KW"/>
</dbReference>
<dbReference type="CDD" id="cd00072">
    <property type="entry name" value="GYF"/>
    <property type="match status" value="1"/>
</dbReference>
<dbReference type="CDD" id="cd15568">
    <property type="entry name" value="PHD5_NSD"/>
    <property type="match status" value="1"/>
</dbReference>
<dbReference type="CDD" id="cd10567">
    <property type="entry name" value="SWIB-MDM2_like"/>
    <property type="match status" value="1"/>
</dbReference>
<dbReference type="FunFam" id="3.30.40.10:FF:000303">
    <property type="entry name" value="Zinc finger CCCH domain-containing protein 19"/>
    <property type="match status" value="1"/>
</dbReference>
<dbReference type="Gene3D" id="3.30.1490.40">
    <property type="match status" value="1"/>
</dbReference>
<dbReference type="Gene3D" id="3.90.70.200">
    <property type="entry name" value="Plus-3 domain"/>
    <property type="match status" value="1"/>
</dbReference>
<dbReference type="Gene3D" id="1.10.245.10">
    <property type="entry name" value="SWIB/MDM2 domain"/>
    <property type="match status" value="1"/>
</dbReference>
<dbReference type="Gene3D" id="3.30.40.10">
    <property type="entry name" value="Zinc/RING finger domain, C3HC4 (zinc finger)"/>
    <property type="match status" value="1"/>
</dbReference>
<dbReference type="InterPro" id="IPR003169">
    <property type="entry name" value="GYF"/>
</dbReference>
<dbReference type="InterPro" id="IPR035445">
    <property type="entry name" value="GYF-like_dom_sf"/>
</dbReference>
<dbReference type="InterPro" id="IPR004343">
    <property type="entry name" value="Plus-3_dom"/>
</dbReference>
<dbReference type="InterPro" id="IPR036128">
    <property type="entry name" value="Plus3-like_sf"/>
</dbReference>
<dbReference type="InterPro" id="IPR019835">
    <property type="entry name" value="SWIB_domain"/>
</dbReference>
<dbReference type="InterPro" id="IPR036885">
    <property type="entry name" value="SWIB_MDM2_dom_sf"/>
</dbReference>
<dbReference type="InterPro" id="IPR003121">
    <property type="entry name" value="SWIB_MDM2_domain"/>
</dbReference>
<dbReference type="InterPro" id="IPR019786">
    <property type="entry name" value="Zinc_finger_PHD-type_CS"/>
</dbReference>
<dbReference type="InterPro" id="IPR000571">
    <property type="entry name" value="Znf_CCCH"/>
</dbReference>
<dbReference type="InterPro" id="IPR036855">
    <property type="entry name" value="Znf_CCCH_sf"/>
</dbReference>
<dbReference type="InterPro" id="IPR011011">
    <property type="entry name" value="Znf_FYVE_PHD"/>
</dbReference>
<dbReference type="InterPro" id="IPR001965">
    <property type="entry name" value="Znf_PHD"/>
</dbReference>
<dbReference type="InterPro" id="IPR019787">
    <property type="entry name" value="Znf_PHD-finger"/>
</dbReference>
<dbReference type="InterPro" id="IPR013083">
    <property type="entry name" value="Znf_RING/FYVE/PHD"/>
</dbReference>
<dbReference type="PANTHER" id="PTHR46695:SF4">
    <property type="entry name" value="ZINC FINGER CCCH DOMAIN-CONTAINING PROTEIN 44"/>
    <property type="match status" value="1"/>
</dbReference>
<dbReference type="PANTHER" id="PTHR46695">
    <property type="entry name" value="ZINC FINGER CCCH DOMAIN-CONTAINING PROTEIN 44-RELATED"/>
    <property type="match status" value="1"/>
</dbReference>
<dbReference type="Pfam" id="PF02213">
    <property type="entry name" value="GYF"/>
    <property type="match status" value="1"/>
</dbReference>
<dbReference type="Pfam" id="PF03126">
    <property type="entry name" value="Plus-3"/>
    <property type="match status" value="1"/>
</dbReference>
<dbReference type="Pfam" id="PF02201">
    <property type="entry name" value="SWIB"/>
    <property type="match status" value="1"/>
</dbReference>
<dbReference type="Pfam" id="PF00642">
    <property type="entry name" value="zf-CCCH"/>
    <property type="match status" value="1"/>
</dbReference>
<dbReference type="SMART" id="SM00444">
    <property type="entry name" value="GYF"/>
    <property type="match status" value="1"/>
</dbReference>
<dbReference type="SMART" id="SM00249">
    <property type="entry name" value="PHD"/>
    <property type="match status" value="1"/>
</dbReference>
<dbReference type="SMART" id="SM00719">
    <property type="entry name" value="Plus3"/>
    <property type="match status" value="1"/>
</dbReference>
<dbReference type="SMART" id="SM00151">
    <property type="entry name" value="SWIB"/>
    <property type="match status" value="1"/>
</dbReference>
<dbReference type="SUPFAM" id="SSF90229">
    <property type="entry name" value="CCCH zinc finger"/>
    <property type="match status" value="1"/>
</dbReference>
<dbReference type="SUPFAM" id="SSF57903">
    <property type="entry name" value="FYVE/PHD zinc finger"/>
    <property type="match status" value="1"/>
</dbReference>
<dbReference type="SUPFAM" id="SSF55277">
    <property type="entry name" value="GYF domain"/>
    <property type="match status" value="1"/>
</dbReference>
<dbReference type="SUPFAM" id="SSF159042">
    <property type="entry name" value="Plus3-like"/>
    <property type="match status" value="1"/>
</dbReference>
<dbReference type="SUPFAM" id="SSF47592">
    <property type="entry name" value="SWIB/MDM2 domain"/>
    <property type="match status" value="1"/>
</dbReference>
<dbReference type="PROSITE" id="PS50829">
    <property type="entry name" value="GYF"/>
    <property type="match status" value="1"/>
</dbReference>
<dbReference type="PROSITE" id="PS51360">
    <property type="entry name" value="PLUS3"/>
    <property type="match status" value="1"/>
</dbReference>
<dbReference type="PROSITE" id="PS51925">
    <property type="entry name" value="SWIB_MDM2"/>
    <property type="match status" value="1"/>
</dbReference>
<dbReference type="PROSITE" id="PS50103">
    <property type="entry name" value="ZF_C3H1"/>
    <property type="match status" value="1"/>
</dbReference>
<dbReference type="PROSITE" id="PS01359">
    <property type="entry name" value="ZF_PHD_1"/>
    <property type="match status" value="1"/>
</dbReference>
<dbReference type="PROSITE" id="PS50016">
    <property type="entry name" value="ZF_PHD_2"/>
    <property type="match status" value="1"/>
</dbReference>
<organism>
    <name type="scientific">Arabidopsis thaliana</name>
    <name type="common">Mouse-ear cress</name>
    <dbReference type="NCBI Taxonomy" id="3702"/>
    <lineage>
        <taxon>Eukaryota</taxon>
        <taxon>Viridiplantae</taxon>
        <taxon>Streptophyta</taxon>
        <taxon>Embryophyta</taxon>
        <taxon>Tracheophyta</taxon>
        <taxon>Spermatophyta</taxon>
        <taxon>Magnoliopsida</taxon>
        <taxon>eudicotyledons</taxon>
        <taxon>Gunneridae</taxon>
        <taxon>Pentapetalae</taxon>
        <taxon>rosids</taxon>
        <taxon>malvids</taxon>
        <taxon>Brassicales</taxon>
        <taxon>Brassicaceae</taxon>
        <taxon>Camelineae</taxon>
        <taxon>Arabidopsis</taxon>
    </lineage>
</organism>
<reference key="1">
    <citation type="journal article" date="2000" name="Nature">
        <title>Sequence and analysis of chromosome 3 of the plant Arabidopsis thaliana.</title>
        <authorList>
            <person name="Salanoubat M."/>
            <person name="Lemcke K."/>
            <person name="Rieger M."/>
            <person name="Ansorge W."/>
            <person name="Unseld M."/>
            <person name="Fartmann B."/>
            <person name="Valle G."/>
            <person name="Bloecker H."/>
            <person name="Perez-Alonso M."/>
            <person name="Obermaier B."/>
            <person name="Delseny M."/>
            <person name="Boutry M."/>
            <person name="Grivell L.A."/>
            <person name="Mache R."/>
            <person name="Puigdomenech P."/>
            <person name="De Simone V."/>
            <person name="Choisne N."/>
            <person name="Artiguenave F."/>
            <person name="Robert C."/>
            <person name="Brottier P."/>
            <person name="Wincker P."/>
            <person name="Cattolico L."/>
            <person name="Weissenbach J."/>
            <person name="Saurin W."/>
            <person name="Quetier F."/>
            <person name="Schaefer M."/>
            <person name="Mueller-Auer S."/>
            <person name="Gabel C."/>
            <person name="Fuchs M."/>
            <person name="Benes V."/>
            <person name="Wurmbach E."/>
            <person name="Drzonek H."/>
            <person name="Erfle H."/>
            <person name="Jordan N."/>
            <person name="Bangert S."/>
            <person name="Wiedelmann R."/>
            <person name="Kranz H."/>
            <person name="Voss H."/>
            <person name="Holland R."/>
            <person name="Brandt P."/>
            <person name="Nyakatura G."/>
            <person name="Vezzi A."/>
            <person name="D'Angelo M."/>
            <person name="Pallavicini A."/>
            <person name="Toppo S."/>
            <person name="Simionati B."/>
            <person name="Conrad A."/>
            <person name="Hornischer K."/>
            <person name="Kauer G."/>
            <person name="Loehnert T.-H."/>
            <person name="Nordsiek G."/>
            <person name="Reichelt J."/>
            <person name="Scharfe M."/>
            <person name="Schoen O."/>
            <person name="Bargues M."/>
            <person name="Terol J."/>
            <person name="Climent J."/>
            <person name="Navarro P."/>
            <person name="Collado C."/>
            <person name="Perez-Perez A."/>
            <person name="Ottenwaelder B."/>
            <person name="Duchemin D."/>
            <person name="Cooke R."/>
            <person name="Laudie M."/>
            <person name="Berger-Llauro C."/>
            <person name="Purnelle B."/>
            <person name="Masuy D."/>
            <person name="de Haan M."/>
            <person name="Maarse A.C."/>
            <person name="Alcaraz J.-P."/>
            <person name="Cottet A."/>
            <person name="Casacuberta E."/>
            <person name="Monfort A."/>
            <person name="Argiriou A."/>
            <person name="Flores M."/>
            <person name="Liguori R."/>
            <person name="Vitale D."/>
            <person name="Mannhaupt G."/>
            <person name="Haase D."/>
            <person name="Schoof H."/>
            <person name="Rudd S."/>
            <person name="Zaccaria P."/>
            <person name="Mewes H.-W."/>
            <person name="Mayer K.F.X."/>
            <person name="Kaul S."/>
            <person name="Town C.D."/>
            <person name="Koo H.L."/>
            <person name="Tallon L.J."/>
            <person name="Jenkins J."/>
            <person name="Rooney T."/>
            <person name="Rizzo M."/>
            <person name="Walts A."/>
            <person name="Utterback T."/>
            <person name="Fujii C.Y."/>
            <person name="Shea T.P."/>
            <person name="Creasy T.H."/>
            <person name="Haas B."/>
            <person name="Maiti R."/>
            <person name="Wu D."/>
            <person name="Peterson J."/>
            <person name="Van Aken S."/>
            <person name="Pai G."/>
            <person name="Militscher J."/>
            <person name="Sellers P."/>
            <person name="Gill J.E."/>
            <person name="Feldblyum T.V."/>
            <person name="Preuss D."/>
            <person name="Lin X."/>
            <person name="Nierman W.C."/>
            <person name="Salzberg S.L."/>
            <person name="White O."/>
            <person name="Venter J.C."/>
            <person name="Fraser C.M."/>
            <person name="Kaneko T."/>
            <person name="Nakamura Y."/>
            <person name="Sato S."/>
            <person name="Kato T."/>
            <person name="Asamizu E."/>
            <person name="Sasamoto S."/>
            <person name="Kimura T."/>
            <person name="Idesawa K."/>
            <person name="Kawashima K."/>
            <person name="Kishida Y."/>
            <person name="Kiyokawa C."/>
            <person name="Kohara M."/>
            <person name="Matsumoto M."/>
            <person name="Matsuno A."/>
            <person name="Muraki A."/>
            <person name="Nakayama S."/>
            <person name="Nakazaki N."/>
            <person name="Shinpo S."/>
            <person name="Takeuchi C."/>
            <person name="Wada T."/>
            <person name="Watanabe A."/>
            <person name="Yamada M."/>
            <person name="Yasuda M."/>
            <person name="Tabata S."/>
        </authorList>
    </citation>
    <scope>NUCLEOTIDE SEQUENCE [LARGE SCALE GENOMIC DNA]</scope>
    <source>
        <strain>cv. Columbia</strain>
    </source>
</reference>
<reference key="2">
    <citation type="journal article" date="2017" name="Plant J.">
        <title>Araport11: a complete reannotation of the Arabidopsis thaliana reference genome.</title>
        <authorList>
            <person name="Cheng C.Y."/>
            <person name="Krishnakumar V."/>
            <person name="Chan A.P."/>
            <person name="Thibaud-Nissen F."/>
            <person name="Schobel S."/>
            <person name="Town C.D."/>
        </authorList>
    </citation>
    <scope>GENOME REANNOTATION</scope>
    <source>
        <strain>cv. Columbia</strain>
    </source>
</reference>
<reference key="3">
    <citation type="journal article" date="2008" name="BMC Genomics">
        <title>Genome-wide analysis of CCCH zinc finger family in Arabidopsis and rice.</title>
        <authorList>
            <person name="Wang D."/>
            <person name="Guo Y."/>
            <person name="Wu C."/>
            <person name="Yang G."/>
            <person name="Li Y."/>
            <person name="Zheng C."/>
        </authorList>
    </citation>
    <scope>NOMENCLATURE</scope>
</reference>
<proteinExistence type="evidence at transcript level"/>
<evidence type="ECO:0000255" key="1">
    <source>
        <dbReference type="PROSITE-ProRule" id="PRU00101"/>
    </source>
</evidence>
<evidence type="ECO:0000255" key="2">
    <source>
        <dbReference type="PROSITE-ProRule" id="PRU00146"/>
    </source>
</evidence>
<evidence type="ECO:0000255" key="3">
    <source>
        <dbReference type="PROSITE-ProRule" id="PRU00693"/>
    </source>
</evidence>
<evidence type="ECO:0000255" key="4">
    <source>
        <dbReference type="PROSITE-ProRule" id="PRU00723"/>
    </source>
</evidence>
<evidence type="ECO:0000255" key="5">
    <source>
        <dbReference type="PROSITE-ProRule" id="PRU01273"/>
    </source>
</evidence>
<evidence type="ECO:0000256" key="6">
    <source>
        <dbReference type="SAM" id="MobiDB-lite"/>
    </source>
</evidence>
<evidence type="ECO:0000305" key="7"/>
<keyword id="KW-0238">DNA-binding</keyword>
<keyword id="KW-0479">Metal-binding</keyword>
<keyword id="KW-1185">Reference proteome</keyword>
<keyword id="KW-0862">Zinc</keyword>
<keyword id="KW-0863">Zinc-finger</keyword>
<feature type="chain" id="PRO_0000371998" description="Zinc finger CCCH domain-containing protein 44">
    <location>
        <begin position="1"/>
        <end position="1292"/>
    </location>
</feature>
<feature type="domain" description="SWIB/MDM2" evidence="5">
    <location>
        <begin position="313"/>
        <end position="396"/>
    </location>
</feature>
<feature type="domain" description="Plus3" evidence="3">
    <location>
        <begin position="453"/>
        <end position="586"/>
    </location>
</feature>
<feature type="domain" description="GYF" evidence="1">
    <location>
        <begin position="716"/>
        <end position="770"/>
    </location>
</feature>
<feature type="zinc finger region" description="PHD-type" evidence="2">
    <location>
        <begin position="110"/>
        <end position="176"/>
    </location>
</feature>
<feature type="zinc finger region" description="C3H1-type" evidence="4">
    <location>
        <begin position="1267"/>
        <end position="1292"/>
    </location>
</feature>
<feature type="region of interest" description="Disordered" evidence="6">
    <location>
        <begin position="1"/>
        <end position="24"/>
    </location>
</feature>
<feature type="region of interest" description="Disordered" evidence="6">
    <location>
        <begin position="72"/>
        <end position="107"/>
    </location>
</feature>
<feature type="region of interest" description="Disordered" evidence="6">
    <location>
        <begin position="256"/>
        <end position="313"/>
    </location>
</feature>
<feature type="region of interest" description="Disordered" evidence="6">
    <location>
        <begin position="401"/>
        <end position="426"/>
    </location>
</feature>
<feature type="region of interest" description="Disordered" evidence="6">
    <location>
        <begin position="624"/>
        <end position="731"/>
    </location>
</feature>
<feature type="region of interest" description="Disordered" evidence="6">
    <location>
        <begin position="777"/>
        <end position="832"/>
    </location>
</feature>
<feature type="region of interest" description="Disordered" evidence="6">
    <location>
        <begin position="876"/>
        <end position="915"/>
    </location>
</feature>
<feature type="region of interest" description="Disordered" evidence="6">
    <location>
        <begin position="1170"/>
        <end position="1245"/>
    </location>
</feature>
<feature type="compositionally biased region" description="Polar residues" evidence="6">
    <location>
        <begin position="1"/>
        <end position="10"/>
    </location>
</feature>
<feature type="compositionally biased region" description="Polar residues" evidence="6">
    <location>
        <begin position="404"/>
        <end position="414"/>
    </location>
</feature>
<feature type="compositionally biased region" description="Low complexity" evidence="6">
    <location>
        <begin position="661"/>
        <end position="675"/>
    </location>
</feature>
<feature type="compositionally biased region" description="Basic and acidic residues" evidence="6">
    <location>
        <begin position="689"/>
        <end position="698"/>
    </location>
</feature>
<feature type="compositionally biased region" description="Polar residues" evidence="6">
    <location>
        <begin position="699"/>
        <end position="708"/>
    </location>
</feature>
<feature type="compositionally biased region" description="Low complexity" evidence="6">
    <location>
        <begin position="813"/>
        <end position="829"/>
    </location>
</feature>
<feature type="compositionally biased region" description="Polar residues" evidence="6">
    <location>
        <begin position="882"/>
        <end position="899"/>
    </location>
</feature>
<feature type="compositionally biased region" description="Polar residues" evidence="6">
    <location>
        <begin position="906"/>
        <end position="915"/>
    </location>
</feature>
<feature type="compositionally biased region" description="Low complexity" evidence="6">
    <location>
        <begin position="1188"/>
        <end position="1206"/>
    </location>
</feature>
<feature type="compositionally biased region" description="Low complexity" evidence="6">
    <location>
        <begin position="1231"/>
        <end position="1244"/>
    </location>
</feature>
<name>C3H44_ARATH</name>
<comment type="sequence caution" evidence="7">
    <conflict type="erroneous gene model prediction">
        <sequence resource="EMBL-CDS" id="CAB62634"/>
    </conflict>
</comment>
<accession>Q9SD34</accession>
<sequence length="1292" mass="142092">MENQQKQLQQGVPELASLAGREESSVRGIDLMRVDQCEEIGVNQVPALSVPASTVAGAVAVPMSNEQEVKVIDEAAPIKRKRGRPPRAQANTPLHIRPPPPPPKKEDKEEDVCFICFDGGDLVLCDRRNCPKAYHPACIKRDEAFFRTTAKWNCGWHICGTCQKASSYMCYTCTFSVCKRCIKDADYVIVRGNMGLCGTCIKPIMLIENIAQGDNEAVKVDFDDKLSWEYLFKVYWLCLKEELSLTVDELTRANNPWKEVPNTAPKVESQNDHTNNRALDVAVNGTKRRRTSDSPTLPNKLDGKNPSNILKKAPGDTSWATKELLEFVSFMKNGDTSVLSQFDVQGLLLDYIKKKNLRDPLQKSQVLCDQMLVKLFGKQRVGHFEMLKLLESHVLIQEKPKGAKTTNGETTHAVPSQIEEDSVHDPMVRDRRRKMRRKTDGRVQNENLDAYAAIDVHNINLIYLRRKFLESLLDDINKVDEKVVGTILRIKVSGSDQKLDIHRLVQVVGTSKAIASYQLGAKTTDVMLEILNLDKREVISIDQLSDQNITEDECKRLRQSIKCGLNKRLTVVDILKTAATLQAMRINEALEAEILKLNHLRDRAKKLELLKSPEERQRLLQEVPEVHTDPSMDPSHALSEDAGLGTRKQDNHVKAQSKGPQNKGVNLNNVGNNVQKKYDAPILRSRNNVHADKDDCSKVHNNSSNIQETGKDDEESEIWHYRDPTGKTQGPFSMVQLRRWKSSGHFPPYLRIWRAHENQDESVLLTDALAGRFDKATTLPSSSSLPQELKPSPHDSGRTGADVNCLQKNQMPVNTSATSSSSSTVTAHSNDPKEKQVVALVACSGKVEDGNSVRPQPQVSCPASISVVPGHVVTPDVRETPGTDQYNTVRADGNHNTTKTLEDETNGGSVSINGSVHAPNLNQESHFLDFPSPTPKSSPEDLEAQAAETIQSLSSCVLVKGPSGVTWSTTTTSTTDAATTTSSVVVTGGQLPQVIQQNTVVLAAPSVKPIELAADHATATQTSDNTQVAQASGWPAIVADPDECDESVSDLLAEVEAMEQNGLPSSPTSTFHCDDDDDLKGPEKDFFNPVARMSLTPETCRLDVSQTSILDNVSAGKSSMLTEAKDNTPFSHCGTAGPELLLFAPPPPPPTAISHDLTLTTTALRLGSETTVEAGTVERLPKSVLGVSSEPSPRSLSSHDSSSARGSTERSPRVSQPKRSSGHSRDRQWLNNGHNSSFNNSHNNRQWPYSNSHGYDHGSGSYAAHPPKGLKICKFYESGYCKRGASCSFWHP</sequence>